<reference key="1">
    <citation type="journal article" date="2006" name="BMC Evol. Biol.">
        <title>The complete chloroplast genome sequence of the chlorophycean green alga Scenedesmus obliquus reveals a compact gene organization and a biased distribution of genes on the two DNA strands.</title>
        <authorList>
            <person name="de Cambiaire J.-C."/>
            <person name="Otis C."/>
            <person name="Lemieux C."/>
            <person name="Turmel M."/>
        </authorList>
    </citation>
    <scope>NUCLEOTIDE SEQUENCE [LARGE SCALE GENOMIC DNA]</scope>
    <source>
        <strain>UTEX 393</strain>
    </source>
</reference>
<organism>
    <name type="scientific">Tetradesmus obliquus</name>
    <name type="common">Green alga</name>
    <name type="synonym">Acutodesmus obliquus</name>
    <dbReference type="NCBI Taxonomy" id="3088"/>
    <lineage>
        <taxon>Eukaryota</taxon>
        <taxon>Viridiplantae</taxon>
        <taxon>Chlorophyta</taxon>
        <taxon>core chlorophytes</taxon>
        <taxon>Chlorophyceae</taxon>
        <taxon>CS clade</taxon>
        <taxon>Sphaeropleales</taxon>
        <taxon>Scenedesmaceae</taxon>
        <taxon>Tetradesmus</taxon>
    </lineage>
</organism>
<sequence>MLTLKVFVYTVVTFFVFLFIFGFLSNDPARNPGKGNLD</sequence>
<geneLocation type="chloroplast"/>
<accession>Q1KVU1</accession>
<keyword id="KW-0150">Chloroplast</keyword>
<keyword id="KW-0472">Membrane</keyword>
<keyword id="KW-0602">Photosynthesis</keyword>
<keyword id="KW-0604">Photosystem II</keyword>
<keyword id="KW-0934">Plastid</keyword>
<keyword id="KW-0674">Reaction center</keyword>
<keyword id="KW-0793">Thylakoid</keyword>
<keyword id="KW-0812">Transmembrane</keyword>
<keyword id="KW-1133">Transmembrane helix</keyword>
<name>PSBI_TETOB</name>
<evidence type="ECO:0000255" key="1">
    <source>
        <dbReference type="HAMAP-Rule" id="MF_01316"/>
    </source>
</evidence>
<feature type="chain" id="PRO_0000275808" description="Photosystem II reaction center protein I">
    <location>
        <begin position="1"/>
        <end position="38"/>
    </location>
</feature>
<feature type="transmembrane region" description="Helical" evidence="1">
    <location>
        <begin position="4"/>
        <end position="24"/>
    </location>
</feature>
<gene>
    <name evidence="1" type="primary">psbI</name>
</gene>
<dbReference type="EMBL" id="DQ396875">
    <property type="protein sequence ID" value="ABD48266.1"/>
    <property type="molecule type" value="Genomic_DNA"/>
</dbReference>
<dbReference type="RefSeq" id="YP_635983.1">
    <property type="nucleotide sequence ID" value="NC_008101.1"/>
</dbReference>
<dbReference type="SMR" id="Q1KVU1"/>
<dbReference type="GeneID" id="4099767"/>
<dbReference type="GO" id="GO:0009535">
    <property type="term" value="C:chloroplast thylakoid membrane"/>
    <property type="evidence" value="ECO:0007669"/>
    <property type="project" value="UniProtKB-SubCell"/>
</dbReference>
<dbReference type="GO" id="GO:0009539">
    <property type="term" value="C:photosystem II reaction center"/>
    <property type="evidence" value="ECO:0007669"/>
    <property type="project" value="InterPro"/>
</dbReference>
<dbReference type="GO" id="GO:0015979">
    <property type="term" value="P:photosynthesis"/>
    <property type="evidence" value="ECO:0007669"/>
    <property type="project" value="UniProtKB-UniRule"/>
</dbReference>
<dbReference type="HAMAP" id="MF_01316">
    <property type="entry name" value="PSII_PsbI"/>
    <property type="match status" value="1"/>
</dbReference>
<dbReference type="InterPro" id="IPR003686">
    <property type="entry name" value="PSII_PsbI"/>
</dbReference>
<dbReference type="InterPro" id="IPR037271">
    <property type="entry name" value="PSII_PsbI_sf"/>
</dbReference>
<dbReference type="NCBIfam" id="NF002735">
    <property type="entry name" value="PRK02655.1"/>
    <property type="match status" value="1"/>
</dbReference>
<dbReference type="PANTHER" id="PTHR35772">
    <property type="entry name" value="PHOTOSYSTEM II REACTION CENTER PROTEIN I"/>
    <property type="match status" value="1"/>
</dbReference>
<dbReference type="PANTHER" id="PTHR35772:SF1">
    <property type="entry name" value="PHOTOSYSTEM II REACTION CENTER PROTEIN I"/>
    <property type="match status" value="1"/>
</dbReference>
<dbReference type="Pfam" id="PF02532">
    <property type="entry name" value="PsbI"/>
    <property type="match status" value="1"/>
</dbReference>
<dbReference type="SUPFAM" id="SSF161041">
    <property type="entry name" value="Photosystem II reaction center protein I, PsbI"/>
    <property type="match status" value="1"/>
</dbReference>
<proteinExistence type="inferred from homology"/>
<comment type="function">
    <text evidence="1">One of the components of the core complex of photosystem II (PSII), required for its stability and/or assembly. PSII is a light-driven water:plastoquinone oxidoreductase that uses light energy to abstract electrons from H(2)O, generating O(2) and a proton gradient subsequently used for ATP formation. It consists of a core antenna complex that captures photons, and an electron transfer chain that converts photonic excitation into a charge separation.</text>
</comment>
<comment type="subunit">
    <text evidence="1">PSII is composed of 1 copy each of membrane proteins PsbA, PsbB, PsbC, PsbD, PsbE, PsbF, PsbH, PsbI, PsbJ, PsbK, PsbL, PsbM, PsbT, PsbX, PsbY, PsbZ, Psb30/Ycf12, at least 3 peripheral proteins of the oxygen-evolving complex and a large number of cofactors. It forms dimeric complexes.</text>
</comment>
<comment type="subcellular location">
    <subcellularLocation>
        <location evidence="1">Plastid</location>
        <location evidence="1">Chloroplast thylakoid membrane</location>
        <topology evidence="1">Single-pass membrane protein</topology>
    </subcellularLocation>
</comment>
<comment type="similarity">
    <text evidence="1">Belongs to the PsbI family.</text>
</comment>
<protein>
    <recommendedName>
        <fullName evidence="1">Photosystem II reaction center protein I</fullName>
        <shortName evidence="1">PSII-I</shortName>
    </recommendedName>
    <alternativeName>
        <fullName evidence="1">PSII 4.8 kDa protein</fullName>
    </alternativeName>
</protein>